<gene>
    <name evidence="1" type="primary">rnz</name>
    <name type="ordered locus">NEQ064</name>
</gene>
<accession>Q74MH2</accession>
<organism>
    <name type="scientific">Nanoarchaeum equitans (strain Kin4-M)</name>
    <dbReference type="NCBI Taxonomy" id="228908"/>
    <lineage>
        <taxon>Archaea</taxon>
        <taxon>Nanobdellota</taxon>
        <taxon>Candidatus Nanoarchaeia</taxon>
        <taxon>Nanoarchaeales</taxon>
        <taxon>Nanoarchaeaceae</taxon>
        <taxon>Nanoarchaeum</taxon>
    </lineage>
</organism>
<protein>
    <recommendedName>
        <fullName evidence="1">Ribonuclease Z</fullName>
        <shortName evidence="1">RNase Z</shortName>
        <ecNumber evidence="1">3.1.26.11</ecNumber>
    </recommendedName>
    <alternativeName>
        <fullName evidence="1">tRNA 3 endonuclease</fullName>
    </alternativeName>
    <alternativeName>
        <fullName evidence="1">tRNase Z</fullName>
    </alternativeName>
</protein>
<feature type="chain" id="PRO_0000155929" description="Ribonuclease Z">
    <location>
        <begin position="1"/>
        <end position="316"/>
    </location>
</feature>
<feature type="active site" description="Proton acceptor" evidence="1">
    <location>
        <position position="63"/>
    </location>
</feature>
<feature type="binding site" evidence="1">
    <location>
        <position position="59"/>
    </location>
    <ligand>
        <name>Zn(2+)</name>
        <dbReference type="ChEBI" id="CHEBI:29105"/>
        <label>1</label>
        <note>catalytic</note>
    </ligand>
</feature>
<feature type="binding site" evidence="1">
    <location>
        <position position="61"/>
    </location>
    <ligand>
        <name>Zn(2+)</name>
        <dbReference type="ChEBI" id="CHEBI:29105"/>
        <label>1</label>
        <note>catalytic</note>
    </ligand>
</feature>
<feature type="binding site" evidence="1">
    <location>
        <position position="63"/>
    </location>
    <ligand>
        <name>Zn(2+)</name>
        <dbReference type="ChEBI" id="CHEBI:29105"/>
        <label>2</label>
        <note>catalytic</note>
    </ligand>
</feature>
<feature type="binding site" evidence="1">
    <location>
        <position position="64"/>
    </location>
    <ligand>
        <name>Zn(2+)</name>
        <dbReference type="ChEBI" id="CHEBI:29105"/>
        <label>2</label>
        <note>catalytic</note>
    </ligand>
</feature>
<feature type="binding site" evidence="1">
    <location>
        <position position="135"/>
    </location>
    <ligand>
        <name>Zn(2+)</name>
        <dbReference type="ChEBI" id="CHEBI:29105"/>
        <label>1</label>
        <note>catalytic</note>
    </ligand>
</feature>
<feature type="binding site" evidence="1">
    <location>
        <position position="203"/>
    </location>
    <ligand>
        <name>Zn(2+)</name>
        <dbReference type="ChEBI" id="CHEBI:29105"/>
        <label>1</label>
        <note>catalytic</note>
    </ligand>
</feature>
<feature type="binding site" evidence="1">
    <location>
        <position position="203"/>
    </location>
    <ligand>
        <name>Zn(2+)</name>
        <dbReference type="ChEBI" id="CHEBI:29105"/>
        <label>2</label>
        <note>catalytic</note>
    </ligand>
</feature>
<feature type="binding site" evidence="1">
    <location>
        <position position="261"/>
    </location>
    <ligand>
        <name>Zn(2+)</name>
        <dbReference type="ChEBI" id="CHEBI:29105"/>
        <label>2</label>
        <note>catalytic</note>
    </ligand>
</feature>
<comment type="function">
    <text evidence="1">Zinc phosphodiesterase, which displays some tRNA 3'-processing endonuclease activity. Probably involved in tRNA maturation, by removing a 3'-trailer from precursor tRNA.</text>
</comment>
<comment type="catalytic activity">
    <reaction evidence="1">
        <text>Endonucleolytic cleavage of RNA, removing extra 3' nucleotides from tRNA precursor, generating 3' termini of tRNAs. A 3'-hydroxy group is left at the tRNA terminus and a 5'-phosphoryl group is left at the trailer molecule.</text>
        <dbReference type="EC" id="3.1.26.11"/>
    </reaction>
</comment>
<comment type="cofactor">
    <cofactor evidence="1">
        <name>Zn(2+)</name>
        <dbReference type="ChEBI" id="CHEBI:29105"/>
    </cofactor>
    <text evidence="1">Binds 2 Zn(2+) ions.</text>
</comment>
<comment type="subunit">
    <text evidence="1">Homodimer.</text>
</comment>
<comment type="similarity">
    <text evidence="1">Belongs to the RNase Z family.</text>
</comment>
<reference key="1">
    <citation type="journal article" date="2003" name="Proc. Natl. Acad. Sci. U.S.A.">
        <title>The genome of Nanoarchaeum equitans: insights into early archaeal evolution and derived parasitism.</title>
        <authorList>
            <person name="Waters E."/>
            <person name="Hohn M.J."/>
            <person name="Ahel I."/>
            <person name="Graham D.E."/>
            <person name="Adams M.D."/>
            <person name="Barnstead M."/>
            <person name="Beeson K.Y."/>
            <person name="Bibbs L."/>
            <person name="Bolanos R."/>
            <person name="Keller M."/>
            <person name="Kretz K."/>
            <person name="Lin X."/>
            <person name="Mathur E."/>
            <person name="Ni J."/>
            <person name="Podar M."/>
            <person name="Richardson T."/>
            <person name="Sutton G.G."/>
            <person name="Simon M."/>
            <person name="Soell D."/>
            <person name="Stetter K.O."/>
            <person name="Short J.M."/>
            <person name="Noorderwier M."/>
        </authorList>
    </citation>
    <scope>NUCLEOTIDE SEQUENCE [LARGE SCALE GENOMIC DNA]</scope>
    <source>
        <strain>Kin4-M</strain>
    </source>
</reference>
<name>RNZ_NANEQ</name>
<dbReference type="EC" id="3.1.26.11" evidence="1"/>
<dbReference type="EMBL" id="AE017199">
    <property type="protein sequence ID" value="AAR38919.1"/>
    <property type="molecule type" value="Genomic_DNA"/>
</dbReference>
<dbReference type="SMR" id="Q74MH2"/>
<dbReference type="STRING" id="228908.NEQ064"/>
<dbReference type="EnsemblBacteria" id="AAR38919">
    <property type="protein sequence ID" value="AAR38919"/>
    <property type="gene ID" value="NEQ064"/>
</dbReference>
<dbReference type="KEGG" id="neq:NEQ064"/>
<dbReference type="PATRIC" id="fig|228908.8.peg.64"/>
<dbReference type="HOGENOM" id="CLU_031317_2_1_2"/>
<dbReference type="Proteomes" id="UP000000578">
    <property type="component" value="Chromosome"/>
</dbReference>
<dbReference type="GO" id="GO:0042781">
    <property type="term" value="F:3'-tRNA processing endoribonuclease activity"/>
    <property type="evidence" value="ECO:0007669"/>
    <property type="project" value="UniProtKB-UniRule"/>
</dbReference>
<dbReference type="GO" id="GO:0008270">
    <property type="term" value="F:zinc ion binding"/>
    <property type="evidence" value="ECO:0007669"/>
    <property type="project" value="UniProtKB-UniRule"/>
</dbReference>
<dbReference type="CDD" id="cd07717">
    <property type="entry name" value="RNaseZ_ZiPD-like_MBL-fold"/>
    <property type="match status" value="1"/>
</dbReference>
<dbReference type="Gene3D" id="3.60.15.10">
    <property type="entry name" value="Ribonuclease Z/Hydroxyacylglutathione hydrolase-like"/>
    <property type="match status" value="1"/>
</dbReference>
<dbReference type="HAMAP" id="MF_01818">
    <property type="entry name" value="RNase_Z_BN"/>
    <property type="match status" value="1"/>
</dbReference>
<dbReference type="InterPro" id="IPR001279">
    <property type="entry name" value="Metallo-B-lactamas"/>
</dbReference>
<dbReference type="InterPro" id="IPR036866">
    <property type="entry name" value="RibonucZ/Hydroxyglut_hydro"/>
</dbReference>
<dbReference type="InterPro" id="IPR013471">
    <property type="entry name" value="RNase_Z/BN"/>
</dbReference>
<dbReference type="NCBIfam" id="NF000801">
    <property type="entry name" value="PRK00055.1-3"/>
    <property type="match status" value="1"/>
</dbReference>
<dbReference type="NCBIfam" id="TIGR02651">
    <property type="entry name" value="RNase_Z"/>
    <property type="match status" value="1"/>
</dbReference>
<dbReference type="PANTHER" id="PTHR46018">
    <property type="entry name" value="ZINC PHOSPHODIESTERASE ELAC PROTEIN 1"/>
    <property type="match status" value="1"/>
</dbReference>
<dbReference type="PANTHER" id="PTHR46018:SF2">
    <property type="entry name" value="ZINC PHOSPHODIESTERASE ELAC PROTEIN 1"/>
    <property type="match status" value="1"/>
</dbReference>
<dbReference type="Pfam" id="PF00753">
    <property type="entry name" value="Lactamase_B"/>
    <property type="match status" value="1"/>
</dbReference>
<dbReference type="SUPFAM" id="SSF56281">
    <property type="entry name" value="Metallo-hydrolase/oxidoreductase"/>
    <property type="match status" value="1"/>
</dbReference>
<keyword id="KW-0255">Endonuclease</keyword>
<keyword id="KW-0378">Hydrolase</keyword>
<keyword id="KW-0479">Metal-binding</keyword>
<keyword id="KW-0540">Nuclease</keyword>
<keyword id="KW-1185">Reference proteome</keyword>
<keyword id="KW-0819">tRNA processing</keyword>
<keyword id="KW-0862">Zinc</keyword>
<evidence type="ECO:0000255" key="1">
    <source>
        <dbReference type="HAMAP-Rule" id="MF_01818"/>
    </source>
</evidence>
<proteinExistence type="inferred from homology"/>
<sequence length="316" mass="36885">MIYILGTGGNMPTKYRQTLSIFVNYMGKGILFDAGENTQRQMRLLNLSPTQIDYIFLTHIHGDHILGLPGILLSLSNQDYNRELTIFGPKGIKEVIEKIIDSFAININFPLKIKEIGETKIDFGPFYIESIYGIHQVPVLAYSFKEKDKIKINKEKLAKYNIRSNPKLAKLKEGKSVTINGITLDPKEFTYIQKGLKFTLITDTLFREQFIDFARDSDIIFHELAFLDKDKDKAIEHYHSTISDAFRIRDESNSKLLVFIHVSPRYQGSLFEIYQYLYNKKDWIIAEDLDYIEYKKGTIIYKRNDIVLYEYAIWRS</sequence>